<name>FLS_FERPE</name>
<protein>
    <recommendedName>
        <fullName evidence="5">Fervidolysin</fullName>
        <ecNumber evidence="4">3.4.21.-</ecNumber>
    </recommendedName>
    <alternativeName>
        <fullName evidence="6">Keratinase</fullName>
    </alternativeName>
    <alternativeName>
        <fullName evidence="5">Subtilisin-like serine protease</fullName>
    </alternativeName>
</protein>
<gene>
    <name evidence="5 10" type="primary">fls</name>
</gene>
<evidence type="ECO:0000255" key="1">
    <source>
        <dbReference type="PROSITE-ProRule" id="PRU01240"/>
    </source>
</evidence>
<evidence type="ECO:0000269" key="2">
    <source>
    </source>
</evidence>
<evidence type="ECO:0000269" key="3">
    <source>
    </source>
</evidence>
<evidence type="ECO:0000269" key="4">
    <source>
    </source>
</evidence>
<evidence type="ECO:0000303" key="5">
    <source>
    </source>
</evidence>
<evidence type="ECO:0000303" key="6">
    <source>
    </source>
</evidence>
<evidence type="ECO:0000305" key="7"/>
<evidence type="ECO:0000305" key="8">
    <source>
    </source>
</evidence>
<evidence type="ECO:0000305" key="9">
    <source>
    </source>
</evidence>
<evidence type="ECO:0000312" key="10">
    <source>
        <dbReference type="EMBL" id="AAK61552.1"/>
    </source>
</evidence>
<evidence type="ECO:0007744" key="11">
    <source>
        <dbReference type="PDB" id="1R6V"/>
    </source>
</evidence>
<evidence type="ECO:0007829" key="12">
    <source>
        <dbReference type="PDB" id="1R6V"/>
    </source>
</evidence>
<organism evidence="10">
    <name type="scientific">Fervidobacterium pennivorans</name>
    <dbReference type="NCBI Taxonomy" id="93466"/>
    <lineage>
        <taxon>Bacteria</taxon>
        <taxon>Thermotogati</taxon>
        <taxon>Thermotogota</taxon>
        <taxon>Thermotogae</taxon>
        <taxon>Thermotogales</taxon>
        <taxon>Fervidobacteriaceae</taxon>
        <taxon>Fervidobacterium</taxon>
    </lineage>
</organism>
<feature type="signal peptide" evidence="8">
    <location>
        <begin position="1"/>
        <end position="21"/>
    </location>
</feature>
<feature type="propeptide" id="PRO_0000437885" evidence="8">
    <location>
        <begin position="22"/>
        <end position="149"/>
    </location>
</feature>
<feature type="chain" id="PRO_5004320072" description="Fervidolysin">
    <location>
        <begin position="150"/>
        <end position="699"/>
    </location>
</feature>
<feature type="domain" description="Peptidase S8" evidence="1">
    <location>
        <begin position="163"/>
        <end position="465"/>
    </location>
</feature>
<feature type="active site" description="Charge relay system" evidence="1 8">
    <location>
        <position position="190"/>
    </location>
</feature>
<feature type="active site" description="Charge relay system" evidence="1 8">
    <location>
        <position position="228"/>
    </location>
</feature>
<feature type="active site" description="Charge relay system" evidence="1 8">
    <location>
        <position position="409"/>
    </location>
</feature>
<feature type="binding site" evidence="3 11">
    <location>
        <position position="157"/>
    </location>
    <ligand>
        <name>Ca(2+)</name>
        <dbReference type="ChEBI" id="CHEBI:29108"/>
    </ligand>
</feature>
<feature type="binding site" evidence="3 11">
    <location>
        <position position="199"/>
    </location>
    <ligand>
        <name>Ca(2+)</name>
        <dbReference type="ChEBI" id="CHEBI:29108"/>
    </ligand>
</feature>
<feature type="binding site" evidence="3 11">
    <location>
        <position position="239"/>
    </location>
    <ligand>
        <name>Ca(2+)</name>
        <dbReference type="ChEBI" id="CHEBI:29108"/>
    </ligand>
</feature>
<feature type="binding site" evidence="3 11">
    <location>
        <position position="241"/>
    </location>
    <ligand>
        <name>Ca(2+)</name>
        <dbReference type="ChEBI" id="CHEBI:29108"/>
    </ligand>
</feature>
<feature type="binding site" evidence="3 11">
    <location>
        <position position="243"/>
    </location>
    <ligand>
        <name>Ca(2+)</name>
        <dbReference type="ChEBI" id="CHEBI:29108"/>
    </ligand>
</feature>
<feature type="binding site" evidence="3 11">
    <location>
        <position position="245"/>
    </location>
    <ligand>
        <name>Ca(2+)</name>
        <dbReference type="ChEBI" id="CHEBI:29108"/>
    </ligand>
</feature>
<feature type="mutagenesis site" description="Blocks the proteolytic cleavage leading to mature fervidolysin." evidence="2">
    <original>H</original>
    <variation>A</variation>
    <location>
        <position position="228"/>
    </location>
</feature>
<feature type="strand" evidence="12">
    <location>
        <begin position="61"/>
        <end position="68"/>
    </location>
</feature>
<feature type="helix" evidence="12">
    <location>
        <begin position="69"/>
        <end position="79"/>
    </location>
</feature>
<feature type="strand" evidence="12">
    <location>
        <begin position="82"/>
        <end position="87"/>
    </location>
</feature>
<feature type="helix" evidence="12">
    <location>
        <begin position="88"/>
        <end position="90"/>
    </location>
</feature>
<feature type="strand" evidence="12">
    <location>
        <begin position="92"/>
        <end position="96"/>
    </location>
</feature>
<feature type="helix" evidence="12">
    <location>
        <begin position="102"/>
        <end position="109"/>
    </location>
</feature>
<feature type="strand" evidence="12">
    <location>
        <begin position="115"/>
        <end position="121"/>
    </location>
</feature>
<feature type="turn" evidence="12">
    <location>
        <begin position="138"/>
        <end position="141"/>
    </location>
</feature>
<feature type="strand" evidence="12">
    <location>
        <begin position="143"/>
        <end position="146"/>
    </location>
</feature>
<feature type="strand" evidence="12">
    <location>
        <begin position="149"/>
        <end position="151"/>
    </location>
</feature>
<feature type="helix" evidence="12">
    <location>
        <begin position="160"/>
        <end position="162"/>
    </location>
</feature>
<feature type="helix" evidence="12">
    <location>
        <begin position="164"/>
        <end position="168"/>
    </location>
</feature>
<feature type="helix" evidence="12">
    <location>
        <begin position="173"/>
        <end position="178"/>
    </location>
</feature>
<feature type="strand" evidence="12">
    <location>
        <begin position="185"/>
        <end position="191"/>
    </location>
</feature>
<feature type="helix" evidence="12">
    <location>
        <begin position="198"/>
        <end position="200"/>
    </location>
</feature>
<feature type="turn" evidence="12">
    <location>
        <begin position="201"/>
        <end position="203"/>
    </location>
</feature>
<feature type="strand" evidence="12">
    <location>
        <begin position="207"/>
        <end position="209"/>
    </location>
</feature>
<feature type="helix" evidence="12">
    <location>
        <begin position="210"/>
        <end position="212"/>
    </location>
</feature>
<feature type="strand" evidence="12">
    <location>
        <begin position="214"/>
        <end position="216"/>
    </location>
</feature>
<feature type="helix" evidence="12">
    <location>
        <begin position="228"/>
        <end position="237"/>
    </location>
</feature>
<feature type="strand" evidence="12">
    <location>
        <begin position="241"/>
        <end position="244"/>
    </location>
</feature>
<feature type="strand" evidence="12">
    <location>
        <begin position="252"/>
        <end position="260"/>
    </location>
</feature>
<feature type="helix" evidence="12">
    <location>
        <begin position="263"/>
        <end position="266"/>
    </location>
</feature>
<feature type="helix" evidence="12">
    <location>
        <begin position="274"/>
        <end position="286"/>
    </location>
</feature>
<feature type="strand" evidence="12">
    <location>
        <begin position="290"/>
        <end position="294"/>
    </location>
</feature>
<feature type="strand" evidence="12">
    <location>
        <begin position="296"/>
        <end position="299"/>
    </location>
</feature>
<feature type="helix" evidence="12">
    <location>
        <begin position="303"/>
        <end position="314"/>
    </location>
</feature>
<feature type="strand" evidence="12">
    <location>
        <begin position="318"/>
        <end position="322"/>
    </location>
</feature>
<feature type="strand" evidence="12">
    <location>
        <begin position="327"/>
        <end position="329"/>
    </location>
</feature>
<feature type="turn" evidence="12">
    <location>
        <begin position="335"/>
        <end position="337"/>
    </location>
</feature>
<feature type="strand" evidence="12">
    <location>
        <begin position="342"/>
        <end position="350"/>
    </location>
</feature>
<feature type="strand" evidence="12">
    <location>
        <begin position="353"/>
        <end position="356"/>
    </location>
</feature>
<feature type="strand" evidence="12">
    <location>
        <begin position="358"/>
        <end position="360"/>
    </location>
</feature>
<feature type="strand" evidence="12">
    <location>
        <begin position="366"/>
        <end position="371"/>
    </location>
</feature>
<feature type="strand" evidence="12">
    <location>
        <begin position="373"/>
        <end position="378"/>
    </location>
</feature>
<feature type="strand" evidence="12">
    <location>
        <begin position="397"/>
        <end position="399"/>
    </location>
</feature>
<feature type="strand" evidence="12">
    <location>
        <begin position="402"/>
        <end position="407"/>
    </location>
</feature>
<feature type="helix" evidence="12">
    <location>
        <begin position="408"/>
        <end position="425"/>
    </location>
</feature>
<feature type="helix" evidence="12">
    <location>
        <begin position="431"/>
        <end position="441"/>
    </location>
</feature>
<feature type="strand" evidence="12">
    <location>
        <begin position="445"/>
        <end position="449"/>
    </location>
</feature>
<feature type="turn" evidence="12">
    <location>
        <begin position="452"/>
        <end position="454"/>
    </location>
</feature>
<feature type="helix" evidence="12">
    <location>
        <begin position="461"/>
        <end position="466"/>
    </location>
</feature>
<feature type="strand" evidence="12">
    <location>
        <begin position="471"/>
        <end position="483"/>
    </location>
</feature>
<feature type="strand" evidence="12">
    <location>
        <begin position="494"/>
        <end position="499"/>
    </location>
</feature>
<feature type="strand" evidence="12">
    <location>
        <begin position="501"/>
        <end position="503"/>
    </location>
</feature>
<feature type="strand" evidence="12">
    <location>
        <begin position="506"/>
        <end position="509"/>
    </location>
</feature>
<feature type="strand" evidence="12">
    <location>
        <begin position="514"/>
        <end position="522"/>
    </location>
</feature>
<feature type="strand" evidence="12">
    <location>
        <begin position="524"/>
        <end position="533"/>
    </location>
</feature>
<feature type="turn" evidence="12">
    <location>
        <begin position="542"/>
        <end position="544"/>
    </location>
</feature>
<feature type="helix" evidence="12">
    <location>
        <begin position="558"/>
        <end position="560"/>
    </location>
</feature>
<feature type="strand" evidence="12">
    <location>
        <begin position="563"/>
        <end position="572"/>
    </location>
</feature>
<feature type="strand" evidence="12">
    <location>
        <begin position="577"/>
        <end position="581"/>
    </location>
</feature>
<feature type="strand" evidence="12">
    <location>
        <begin position="586"/>
        <end position="590"/>
    </location>
</feature>
<feature type="strand" evidence="12">
    <location>
        <begin position="597"/>
        <end position="599"/>
    </location>
</feature>
<feature type="strand" evidence="12">
    <location>
        <begin position="601"/>
        <end position="605"/>
    </location>
</feature>
<feature type="strand" evidence="12">
    <location>
        <begin position="612"/>
        <end position="617"/>
    </location>
</feature>
<feature type="strand" evidence="12">
    <location>
        <begin position="623"/>
        <end position="625"/>
    </location>
</feature>
<feature type="strand" evidence="12">
    <location>
        <begin position="630"/>
        <end position="638"/>
    </location>
</feature>
<feature type="strand" evidence="12">
    <location>
        <begin position="647"/>
        <end position="655"/>
    </location>
</feature>
<feature type="strand" evidence="12">
    <location>
        <begin position="658"/>
        <end position="666"/>
    </location>
</feature>
<feature type="strand" evidence="12">
    <location>
        <begin position="671"/>
        <end position="676"/>
    </location>
</feature>
<feature type="strand" evidence="12">
    <location>
        <begin position="682"/>
        <end position="684"/>
    </location>
</feature>
<feature type="strand" evidence="12">
    <location>
        <begin position="686"/>
        <end position="688"/>
    </location>
</feature>
<feature type="strand" evidence="12">
    <location>
        <begin position="694"/>
        <end position="697"/>
    </location>
</feature>
<keyword id="KW-0002">3D-structure</keyword>
<keyword id="KW-0068">Autocatalytic cleavage</keyword>
<keyword id="KW-0106">Calcium</keyword>
<keyword id="KW-0903">Direct protein sequencing</keyword>
<keyword id="KW-0378">Hydrolase</keyword>
<keyword id="KW-0479">Metal-binding</keyword>
<keyword id="KW-0645">Protease</keyword>
<keyword id="KW-0720">Serine protease</keyword>
<keyword id="KW-0732">Signal</keyword>
<keyword id="KW-0865">Zymogen</keyword>
<accession>Q93LQ6</accession>
<dbReference type="EC" id="3.4.21.-" evidence="4"/>
<dbReference type="EMBL" id="AY035311">
    <property type="protein sequence ID" value="AAK61552.1"/>
    <property type="molecule type" value="Genomic_DNA"/>
</dbReference>
<dbReference type="PDB" id="1R6V">
    <property type="method" value="X-ray"/>
    <property type="resolution" value="1.70 A"/>
    <property type="chains" value="A=29-699"/>
</dbReference>
<dbReference type="PDBsum" id="1R6V"/>
<dbReference type="SMR" id="Q93LQ6"/>
<dbReference type="MEROPS" id="S08.021"/>
<dbReference type="OMA" id="WQIRKLL"/>
<dbReference type="EvolutionaryTrace" id="Q93LQ6"/>
<dbReference type="GO" id="GO:0009986">
    <property type="term" value="C:cell surface"/>
    <property type="evidence" value="ECO:0000314"/>
    <property type="project" value="UniProtKB"/>
</dbReference>
<dbReference type="GO" id="GO:0005509">
    <property type="term" value="F:calcium ion binding"/>
    <property type="evidence" value="ECO:0000314"/>
    <property type="project" value="UniProtKB"/>
</dbReference>
<dbReference type="GO" id="GO:0008233">
    <property type="term" value="F:peptidase activity"/>
    <property type="evidence" value="ECO:0000314"/>
    <property type="project" value="UniProtKB"/>
</dbReference>
<dbReference type="GO" id="GO:0004252">
    <property type="term" value="F:serine-type endopeptidase activity"/>
    <property type="evidence" value="ECO:0007669"/>
    <property type="project" value="InterPro"/>
</dbReference>
<dbReference type="GO" id="GO:0016540">
    <property type="term" value="P:protein autoprocessing"/>
    <property type="evidence" value="ECO:0000314"/>
    <property type="project" value="UniProtKB"/>
</dbReference>
<dbReference type="GO" id="GO:0006508">
    <property type="term" value="P:proteolysis"/>
    <property type="evidence" value="ECO:0000314"/>
    <property type="project" value="UniProtKB"/>
</dbReference>
<dbReference type="CDD" id="cd07485">
    <property type="entry name" value="Peptidases_S8_Fervidolysin_like"/>
    <property type="match status" value="1"/>
</dbReference>
<dbReference type="Gene3D" id="2.60.40.1800">
    <property type="match status" value="1"/>
</dbReference>
<dbReference type="Gene3D" id="2.60.40.10">
    <property type="entry name" value="Immunoglobulins"/>
    <property type="match status" value="1"/>
</dbReference>
<dbReference type="Gene3D" id="3.30.70.80">
    <property type="entry name" value="Peptidase S8 propeptide/proteinase inhibitor I9"/>
    <property type="match status" value="1"/>
</dbReference>
<dbReference type="Gene3D" id="3.40.50.200">
    <property type="entry name" value="Peptidase S8/S53 domain"/>
    <property type="match status" value="1"/>
</dbReference>
<dbReference type="InterPro" id="IPR054399">
    <property type="entry name" value="Fervidolysin-like_N_prodom"/>
</dbReference>
<dbReference type="InterPro" id="IPR034063">
    <property type="entry name" value="Fervidolysin_dom"/>
</dbReference>
<dbReference type="InterPro" id="IPR054400">
    <property type="entry name" value="Fervidolysin_SD2"/>
</dbReference>
<dbReference type="InterPro" id="IPR013783">
    <property type="entry name" value="Ig-like_fold"/>
</dbReference>
<dbReference type="InterPro" id="IPR056489">
    <property type="entry name" value="Ig_Fls_DR_A0283-like"/>
</dbReference>
<dbReference type="InterPro" id="IPR000209">
    <property type="entry name" value="Peptidase_S8/S53_dom"/>
</dbReference>
<dbReference type="InterPro" id="IPR036852">
    <property type="entry name" value="Peptidase_S8/S53_dom_sf"/>
</dbReference>
<dbReference type="InterPro" id="IPR023827">
    <property type="entry name" value="Peptidase_S8_Asp-AS"/>
</dbReference>
<dbReference type="InterPro" id="IPR022398">
    <property type="entry name" value="Peptidase_S8_His-AS"/>
</dbReference>
<dbReference type="InterPro" id="IPR023828">
    <property type="entry name" value="Peptidase_S8_Ser-AS"/>
</dbReference>
<dbReference type="InterPro" id="IPR050131">
    <property type="entry name" value="Peptidase_S8_subtilisin-like"/>
</dbReference>
<dbReference type="InterPro" id="IPR015500">
    <property type="entry name" value="Peptidase_S8_subtilisin-rel"/>
</dbReference>
<dbReference type="InterPro" id="IPR037045">
    <property type="entry name" value="S8pro/Inhibitor_I9_sf"/>
</dbReference>
<dbReference type="PANTHER" id="PTHR43806:SF11">
    <property type="entry name" value="CEREVISIN-RELATED"/>
    <property type="match status" value="1"/>
</dbReference>
<dbReference type="PANTHER" id="PTHR43806">
    <property type="entry name" value="PEPTIDASE S8"/>
    <property type="match status" value="1"/>
</dbReference>
<dbReference type="Pfam" id="PF22148">
    <property type="entry name" value="Fervidolysin_NPro-like"/>
    <property type="match status" value="1"/>
</dbReference>
<dbReference type="Pfam" id="PF22349">
    <property type="entry name" value="Fervidolysin_SD2"/>
    <property type="match status" value="1"/>
</dbReference>
<dbReference type="Pfam" id="PF24025">
    <property type="entry name" value="Ig_DR_A0283-like"/>
    <property type="match status" value="1"/>
</dbReference>
<dbReference type="Pfam" id="PF00082">
    <property type="entry name" value="Peptidase_S8"/>
    <property type="match status" value="1"/>
</dbReference>
<dbReference type="PRINTS" id="PR00723">
    <property type="entry name" value="SUBTILISIN"/>
</dbReference>
<dbReference type="SUPFAM" id="SSF52743">
    <property type="entry name" value="Subtilisin-like"/>
    <property type="match status" value="1"/>
</dbReference>
<dbReference type="PROSITE" id="PS51257">
    <property type="entry name" value="PROKAR_LIPOPROTEIN"/>
    <property type="match status" value="1"/>
</dbReference>
<dbReference type="PROSITE" id="PS51892">
    <property type="entry name" value="SUBTILASE"/>
    <property type="match status" value="1"/>
</dbReference>
<dbReference type="PROSITE" id="PS00136">
    <property type="entry name" value="SUBTILASE_ASP"/>
    <property type="match status" value="1"/>
</dbReference>
<dbReference type="PROSITE" id="PS00137">
    <property type="entry name" value="SUBTILASE_HIS"/>
    <property type="match status" value="1"/>
</dbReference>
<dbReference type="PROSITE" id="PS00138">
    <property type="entry name" value="SUBTILASE_SER"/>
    <property type="match status" value="1"/>
</dbReference>
<reference key="1">
    <citation type="journal article" date="2002" name="Extremophiles">
        <title>Molecular characterization of fervidolysin, a subtilisin-like serine protease from the thermophilic bacterium Fervidobacterium pennivorans.</title>
        <authorList>
            <person name="Kluskens L.D."/>
            <person name="Voorhorst W.G."/>
            <person name="Siezen R.J."/>
            <person name="Schwerdtfeger R.M."/>
            <person name="Antranikian G."/>
            <person name="van der Oost J."/>
            <person name="de Vos W.M."/>
        </authorList>
    </citation>
    <scope>NUCLEOTIDE SEQUENCE [GENOMIC DNA]</scope>
    <scope>PROTEIN SEQUENCE OF 28-37 AND 150-161</scope>
    <scope>MUTAGENESIS OF HIS-228</scope>
    <scope>AUTO-PROTEOLYTIC PROCESSING</scope>
    <scope>ACTIVE SITE</scope>
</reference>
<reference key="2">
    <citation type="journal article" date="1996" name="Appl. Environ. Microbiol.">
        <title>Keratin degradation by Fervidobacterium pennavorans, a novel thermophilic anaerobic species of the order Thermotogales.</title>
        <authorList>
            <person name="Friedrich A.B."/>
            <person name="Antranikian G."/>
        </authorList>
    </citation>
    <scope>FUNCTION</scope>
    <scope>CATALYTIC ACTIVITY</scope>
    <scope>BIOPHYSICOCHEMICAL PROPERTIES</scope>
    <scope>ACTIVITY REGULATION</scope>
    <scope>SUBCELLULAR LOCATION</scope>
    <scope>BIOTECHNOLOGY</scope>
</reference>
<reference key="3">
    <citation type="journal article" date="2004" name="J. Mol. Biol.">
        <title>Crystal structure of fervidolysin from Fervidobacterium pennivorans, a keratinolytic enzyme related to subtilisin.</title>
        <authorList>
            <person name="Kim J.S."/>
            <person name="Kluskens L.D."/>
            <person name="de Vos W.M."/>
            <person name="Huber R."/>
            <person name="van der Oost J."/>
        </authorList>
    </citation>
    <scope>X-RAY CRYSTALLOGRAPHY (1.70 ANGSTROMS) OF 29-699 IN COMPLEX WITH CALCIUM</scope>
    <scope>DOMAIN</scope>
</reference>
<sequence length="699" mass="75057">MRKVLLIASIVALILALFSCANPSFEPRSKAKDLASLPEIKSQGYHILFGELRDGEYTEGKILVGYNDRSEVDKIVKAVNGKVVLELPQIKVVSIKLNGMTVKQAYDKIKALALKGIRYVEPSYKRELIKPTVVKPNPDMYKIRKPGLNSTARDYGEELSNELWGLEAIGVTQQLWEEASGTNIIVAVVDTGVDGTHPDLEGQVIAGYRPAFDEELPAGTDSSYGGSHGTHVAGTIAAKKDGKGIVGVAPGAKIMPIVIFDDPALVGGNGYVGDDYVAAGIIWATDHGAKVMNHSWGGWGYSYTMKEAFDYAMEHGVVMVVSAGNNTSDSHHQYPAGYPGVIQVAALDYYGGTFRVAGFSSRSDGVSVGAPGVTILSTVPGEDSIGYEGHNENVPATNGGTYDYYQGTSMAAPHVTGVVAVLLQKFPNAKPWQIRKLLENTAFDFNGNGWDHDTGYGLVKLDAALQGPLPTQGGVEEFQVVVTDAKGNFGVPTVFVSMMRDNGSCYYAKTGPDGIARFPHIDSGTYDIFVGGPDHWDRALAPYDGESIPGGYAIALRMAEERQASFVGFGVSPDATQLNVNFNSTLQVKFSTNLSTLKDPQFVVVDPLLRGVYGRVAYARNQTYDLSLLSGQISFGIQTLLPAATDITIQGTVTLNGEDIPVYGVLKAGTTWTIIDDFGGLNLGTDSQPIYVWWTIFGQ</sequence>
<proteinExistence type="evidence at protein level"/>
<comment type="function">
    <text evidence="4">Protease able to degrade keratin into peptides. Is responsible for keratinolysis by F.pennivorans, which allows this bacterium to grow on native feathers.</text>
</comment>
<comment type="activity regulation">
    <text evidence="4">Is inhibited by phenylmethylsulfonyl fluoride and 3,4-dichloroisocoumarin. EDTA and iodoacetate (1 to 5 mM) have only little effect on the enzyme activity.</text>
</comment>
<comment type="biophysicochemical properties">
    <phDependence>
        <text evidence="4">Optimum pH is 10. Is active in a broad pH range, namely, between pH 6.0 and 10.5.</text>
    </phDependence>
    <temperatureDependence>
        <text evidence="4">Optimum temperature is 80 degrees Celsius. Is active in a broad temperature range, namely, between 50 and 100 degrees Celsius. Thermostable.</text>
    </temperatureDependence>
</comment>
<comment type="subcellular location">
    <subcellularLocation>
        <location evidence="4">Cell surface</location>
    </subcellularLocation>
    <text evidence="4">Is cell-bound, probably associated with the outer cell envelope.</text>
</comment>
<comment type="domain">
    <text evidence="3">Is composed of four domains: a catalytic domain, two beta-sandwich domains that may mediate interactions with substrate, and the propeptide domain.</text>
</comment>
<comment type="PTM">
    <text evidence="2 3">Undergoes auto-proteolytic processing. Once cleaved, the propeptide can remain associated with the protease and blocks its activity. The physiological activation of fervidolysin is proposed to be achieved through the stepwise removal of the propeptide accomplished by several proteolytic cleavages that may not be autolytic.</text>
</comment>
<comment type="biotechnology">
    <text evidence="9">The thermostable keratinase of F.pennavorans is a promising enzyme for application in an industrial process. Native feathers produced as waste by poultry farming could be converted to peptides and rare amino acids like proline and serine.</text>
</comment>
<comment type="similarity">
    <text evidence="7">Belongs to the peptidase S8 family.</text>
</comment>